<protein>
    <recommendedName>
        <fullName>3 beta-hydroxysteroid dehydrogenase/Delta 5--&gt;4-isomerase</fullName>
        <shortName>3-beta-HSD</shortName>
    </recommendedName>
    <domain>
        <recommendedName>
            <fullName>3-beta-hydroxy-Delta(5)-steroid dehydrogenase</fullName>
            <ecNumber>1.1.1.145</ecNumber>
        </recommendedName>
        <alternativeName>
            <fullName>3-beta-hydroxy-5-ene steroid dehydrogenase</fullName>
        </alternativeName>
        <alternativeName>
            <fullName>Progesterone reductase</fullName>
        </alternativeName>
    </domain>
    <domain>
        <recommendedName>
            <fullName>Steroid Delta-isomerase</fullName>
            <ecNumber>5.3.3.1</ecNumber>
        </recommendedName>
        <alternativeName>
            <fullName>Delta-5-3-ketosteroid isomerase</fullName>
        </alternativeName>
    </domain>
</protein>
<evidence type="ECO:0000250" key="1"/>
<evidence type="ECO:0000250" key="2">
    <source>
        <dbReference type="UniProtKB" id="P26670"/>
    </source>
</evidence>
<evidence type="ECO:0000305" key="3"/>
<proteinExistence type="evidence at transcript level"/>
<sequence>MAVYAVTGGAGFLGRYIVKLLISADDVQEIRVIDIVEDPQPITSKVKVINYIQCDINDFDKVREALDGVNLIIHTAALVDVFGKYTDNEIMKVNYYGTQTILAACVDLGIKYLIYTSSMEAIGPNKHGDPFIGHEHTLYDISPGHVYAKSKRMAEQLVMKANNSVIMNGAKLYTCCLRPTGIYGEGDKLTKVFYEQCKQHGNIMYRTVDDNAVHSRVYVGNAAWMHVLAAKYIQYPGSKIKGNAYFCYDYSPSCSYDMFNLLLMKPLGIEQGSRIPRWMLKMYACKNDMKRILFRKPSLLNNYTLKISNTTFEVRTNNAELDFNYSPIFDVDVAFKRTRKWLEESE</sequence>
<accession>P21097</accession>
<keyword id="KW-0244">Early protein</keyword>
<keyword id="KW-0945">Host-virus interaction</keyword>
<keyword id="KW-0413">Isomerase</keyword>
<keyword id="KW-0511">Multifunctional enzyme</keyword>
<keyword id="KW-0520">NAD</keyword>
<keyword id="KW-0560">Oxidoreductase</keyword>
<keyword id="KW-1185">Reference proteome</keyword>
<keyword id="KW-0755">Steroidogenesis</keyword>
<keyword id="KW-0899">Viral immunoevasion</keyword>
<dbReference type="EC" id="1.1.1.145"/>
<dbReference type="EC" id="5.3.3.1"/>
<dbReference type="EMBL" id="M35027">
    <property type="protein sequence ID" value="AAA48175.1"/>
    <property type="molecule type" value="Genomic_DNA"/>
</dbReference>
<dbReference type="PIR" id="A42522">
    <property type="entry name" value="WMVZ1W"/>
</dbReference>
<dbReference type="SMR" id="P21097"/>
<dbReference type="UniPathway" id="UPA00062"/>
<dbReference type="Proteomes" id="UP000008269">
    <property type="component" value="Segment"/>
</dbReference>
<dbReference type="GO" id="GO:0003854">
    <property type="term" value="F:3-beta-hydroxy-Delta5-steroid dehydrogenase (NAD+) activity"/>
    <property type="evidence" value="ECO:0007669"/>
    <property type="project" value="UniProtKB-EC"/>
</dbReference>
<dbReference type="GO" id="GO:0004769">
    <property type="term" value="F:steroid Delta-isomerase activity"/>
    <property type="evidence" value="ECO:0007669"/>
    <property type="project" value="UniProtKB-EC"/>
</dbReference>
<dbReference type="GO" id="GO:0006694">
    <property type="term" value="P:steroid biosynthetic process"/>
    <property type="evidence" value="ECO:0007669"/>
    <property type="project" value="UniProtKB-UniPathway"/>
</dbReference>
<dbReference type="FunFam" id="3.40.50.720:FF:000495">
    <property type="entry name" value="3 hydroxysteroid dehydrogenase, putative"/>
    <property type="match status" value="1"/>
</dbReference>
<dbReference type="Gene3D" id="3.40.50.720">
    <property type="entry name" value="NAD(P)-binding Rossmann-like Domain"/>
    <property type="match status" value="1"/>
</dbReference>
<dbReference type="InterPro" id="IPR002225">
    <property type="entry name" value="3Beta_OHSteriod_DH/Estase"/>
</dbReference>
<dbReference type="InterPro" id="IPR050177">
    <property type="entry name" value="Lipid_A_modif_metabolic_enz"/>
</dbReference>
<dbReference type="InterPro" id="IPR036291">
    <property type="entry name" value="NAD(P)-bd_dom_sf"/>
</dbReference>
<dbReference type="PANTHER" id="PTHR43245">
    <property type="entry name" value="BIFUNCTIONAL POLYMYXIN RESISTANCE PROTEIN ARNA"/>
    <property type="match status" value="1"/>
</dbReference>
<dbReference type="PANTHER" id="PTHR43245:SF51">
    <property type="entry name" value="SHORT CHAIN DEHYDROGENASE_REDUCTASE FAMILY 42E, MEMBER 2"/>
    <property type="match status" value="1"/>
</dbReference>
<dbReference type="Pfam" id="PF01073">
    <property type="entry name" value="3Beta_HSD"/>
    <property type="match status" value="1"/>
</dbReference>
<dbReference type="SUPFAM" id="SSF51735">
    <property type="entry name" value="NAD(P)-binding Rossmann-fold domains"/>
    <property type="match status" value="1"/>
</dbReference>
<gene>
    <name type="primary">OPG174</name>
    <name type="ORF">A44L</name>
</gene>
<name>3BHS_VACCC</name>
<feature type="chain" id="PRO_0000087794" description="3 beta-hydroxysteroid dehydrogenase/Delta 5--&gt;4-isomerase">
    <location>
        <begin position="1"/>
        <end position="346"/>
    </location>
</feature>
<feature type="active site" description="Proton acceptor" evidence="1">
    <location>
        <position position="147"/>
    </location>
</feature>
<feature type="binding site" evidence="1">
    <location>
        <position position="151"/>
    </location>
    <ligand>
        <name>NAD(+)</name>
        <dbReference type="ChEBI" id="CHEBI:57540"/>
    </ligand>
</feature>
<comment type="function">
    <text evidence="2">Catalyzes the oxidative conversion of Delta(5)-ene-3-beta-hydroxy steroid, and the oxidative conversion of ketosteroids. The 3-beta-HSD enzymatic system plays a crucial role in the biosynthesis of all classes of hormonal steroids. During viral infection, steroid production contributes to virulence by inhibiting the host inflammatory response.</text>
</comment>
<comment type="catalytic activity">
    <reaction evidence="2">
        <text>a 3beta-hydroxy-Delta(5)-steroid + NAD(+) = a 3-oxo-Delta(5)-steroid + NADH + H(+)</text>
        <dbReference type="Rhea" id="RHEA:24076"/>
        <dbReference type="ChEBI" id="CHEBI:1722"/>
        <dbReference type="ChEBI" id="CHEBI:15378"/>
        <dbReference type="ChEBI" id="CHEBI:47907"/>
        <dbReference type="ChEBI" id="CHEBI:57540"/>
        <dbReference type="ChEBI" id="CHEBI:57945"/>
        <dbReference type="EC" id="1.1.1.145"/>
    </reaction>
</comment>
<comment type="catalytic activity">
    <reaction evidence="2">
        <text>a 3-oxo-Delta(5)-steroid = a 3-oxo-Delta(4)-steroid</text>
        <dbReference type="Rhea" id="RHEA:14709"/>
        <dbReference type="ChEBI" id="CHEBI:47907"/>
        <dbReference type="ChEBI" id="CHEBI:47909"/>
        <dbReference type="EC" id="5.3.3.1"/>
    </reaction>
</comment>
<comment type="pathway">
    <text evidence="2">Lipid metabolism; steroid biosynthesis.</text>
</comment>
<comment type="induction">
    <text>Expressed in the early phase of the viral replicative cycle.</text>
</comment>
<comment type="similarity">
    <text evidence="3">Belongs to the 3-beta-HSD family.</text>
</comment>
<reference key="1">
    <citation type="journal article" date="1990" name="Virology">
        <title>The complete DNA sequence of vaccinia virus.</title>
        <authorList>
            <person name="Goebel S.J."/>
            <person name="Johnson G.P."/>
            <person name="Perkus M.E."/>
            <person name="Davis S.W."/>
            <person name="Winslow J.P."/>
            <person name="Paoletti E."/>
        </authorList>
    </citation>
    <scope>NUCLEOTIDE SEQUENCE [LARGE SCALE GENOMIC DNA]</scope>
</reference>
<reference key="2">
    <citation type="journal article" date="1990" name="Virology">
        <title>Appendix to 'The complete DNA sequence of vaccinia virus'.</title>
        <authorList>
            <person name="Goebel S.J."/>
            <person name="Johnson G.P."/>
            <person name="Perkus M.E."/>
            <person name="Davis S.W."/>
            <person name="Winslow J.P."/>
            <person name="Paoletti E."/>
        </authorList>
    </citation>
    <scope>NUCLEOTIDE SEQUENCE [LARGE SCALE GENOMIC DNA]</scope>
</reference>
<organismHost>
    <name type="scientific">Homo sapiens</name>
    <name type="common">Human</name>
    <dbReference type="NCBI Taxonomy" id="9606"/>
</organismHost>
<organism>
    <name type="scientific">Vaccinia virus (strain Copenhagen)</name>
    <name type="common">VACV</name>
    <dbReference type="NCBI Taxonomy" id="10249"/>
    <lineage>
        <taxon>Viruses</taxon>
        <taxon>Varidnaviria</taxon>
        <taxon>Bamfordvirae</taxon>
        <taxon>Nucleocytoviricota</taxon>
        <taxon>Pokkesviricetes</taxon>
        <taxon>Chitovirales</taxon>
        <taxon>Poxviridae</taxon>
        <taxon>Chordopoxvirinae</taxon>
        <taxon>Orthopoxvirus</taxon>
        <taxon>Vaccinia virus</taxon>
    </lineage>
</organism>